<organism>
    <name type="scientific">Yarrowia lipolytica (strain CLIB 122 / E 150)</name>
    <name type="common">Yeast</name>
    <name type="synonym">Candida lipolytica</name>
    <dbReference type="NCBI Taxonomy" id="284591"/>
    <lineage>
        <taxon>Eukaryota</taxon>
        <taxon>Fungi</taxon>
        <taxon>Dikarya</taxon>
        <taxon>Ascomycota</taxon>
        <taxon>Saccharomycotina</taxon>
        <taxon>Dipodascomycetes</taxon>
        <taxon>Dipodascales</taxon>
        <taxon>Dipodascales incertae sedis</taxon>
        <taxon>Yarrowia</taxon>
    </lineage>
</organism>
<feature type="transit peptide" description="Mitochondrion" evidence="2">
    <location>
        <begin position="1"/>
        <end position="36"/>
    </location>
</feature>
<feature type="chain" id="PRO_0000408730" description="Altered inheritance of mitochondria protein 9, mitochondrial">
    <location>
        <begin position="37"/>
        <end position="579"/>
    </location>
</feature>
<accession>Q6C8T3</accession>
<evidence type="ECO:0000250" key="1"/>
<evidence type="ECO:0000255" key="2"/>
<evidence type="ECO:0000305" key="3"/>
<proteinExistence type="inferred from homology"/>
<dbReference type="EMBL" id="CR382130">
    <property type="protein sequence ID" value="CAG81120.1"/>
    <property type="molecule type" value="Genomic_DNA"/>
</dbReference>
<dbReference type="RefSeq" id="XP_502929.1">
    <property type="nucleotide sequence ID" value="XM_502929.1"/>
</dbReference>
<dbReference type="FunCoup" id="Q6C8T3">
    <property type="interactions" value="15"/>
</dbReference>
<dbReference type="STRING" id="284591.Q6C8T3"/>
<dbReference type="EnsemblFungi" id="CAG81120">
    <property type="protein sequence ID" value="CAG81120"/>
    <property type="gene ID" value="YALI0_D17160g"/>
</dbReference>
<dbReference type="KEGG" id="yli:2911225"/>
<dbReference type="VEuPathDB" id="FungiDB:YALI0_D17160g"/>
<dbReference type="HOGENOM" id="CLU_019189_0_1_1"/>
<dbReference type="InParanoid" id="Q6C8T3"/>
<dbReference type="OMA" id="GWIPQDM"/>
<dbReference type="OrthoDB" id="122943at4891"/>
<dbReference type="Proteomes" id="UP000001300">
    <property type="component" value="Chromosome D"/>
</dbReference>
<dbReference type="GO" id="GO:0005739">
    <property type="term" value="C:mitochondrion"/>
    <property type="evidence" value="ECO:0007669"/>
    <property type="project" value="UniProtKB-SubCell"/>
</dbReference>
<dbReference type="InterPro" id="IPR011009">
    <property type="entry name" value="Kinase-like_dom_sf"/>
</dbReference>
<dbReference type="InterPro" id="IPR051035">
    <property type="entry name" value="Mito_inheritance_9"/>
</dbReference>
<dbReference type="PANTHER" id="PTHR36091">
    <property type="entry name" value="ALTERED INHERITANCE OF MITOCHONDRIA PROTEIN 9, MITOCHONDRIAL"/>
    <property type="match status" value="1"/>
</dbReference>
<dbReference type="PANTHER" id="PTHR36091:SF1">
    <property type="entry name" value="ALTERED INHERITANCE OF MITOCHONDRIA PROTEIN 9, MITOCHONDRIAL"/>
    <property type="match status" value="1"/>
</dbReference>
<dbReference type="SUPFAM" id="SSF56112">
    <property type="entry name" value="Protein kinase-like (PK-like)"/>
    <property type="match status" value="1"/>
</dbReference>
<keyword id="KW-0496">Mitochondrion</keyword>
<keyword id="KW-1185">Reference proteome</keyword>
<keyword id="KW-0809">Transit peptide</keyword>
<comment type="subcellular location">
    <subcellularLocation>
        <location evidence="1">Mitochondrion</location>
    </subcellularLocation>
</comment>
<comment type="similarity">
    <text evidence="3">Belongs to the AIM9 family.</text>
</comment>
<sequence>MQSWNSQSFLSSHFTMLRYACKRAVPRLNAASGLRFQSSKPADGPETVFTSLNEENDPNRDAFFKYTWGTWLKNNEAERAKRETRFSIEGLAEVIKSLPQSGKAPIEAETEIKVTQLASLHEGKHHRVYRVDVDDGKQYVLRIPYGLGSELFRKKRIQSEVATMDFVREKVANNKFIVPEVYSWNATVDNPLDTQYTLMDYFAGRDTLMKHWNPVAQEMTERAAKIKPVVDIYSALLQPEFTRYGSLYFTEDVSSKDASVLAYKGAENDKKELADRWRIGPTTESRFWKNSLPEDSPLRGPWETAEEYIEATAAINLHNLAELAKNGDRNPAVVAAATATYEKYQQLASQLLLRPEVENDNLFSARMGFGDLHPINVLVEGQKDIAESSLALVDFENTSIKPALLIGTPDYVRYGGLKLFKTEDIPNYDQLSDQEKAQVNYMIAQTQNAFTFEFLLNNEAPEFINSFSPRVKRLSEPVRLALNPLYLEDHLDLSEEMIKLQQDWTPIMGMEREFPVHWTNEEYEKQAKDFAEWNQKAMSTPFFQTKGWVPQDMFEQLFGNGLLDKTESGDYVYVPPKKE</sequence>
<protein>
    <recommendedName>
        <fullName>Altered inheritance of mitochondria protein 9, mitochondrial</fullName>
    </recommendedName>
    <alternativeName>
        <fullName>Found in mitochondrial proteome protein 29</fullName>
    </alternativeName>
</protein>
<reference key="1">
    <citation type="journal article" date="2004" name="Nature">
        <title>Genome evolution in yeasts.</title>
        <authorList>
            <person name="Dujon B."/>
            <person name="Sherman D."/>
            <person name="Fischer G."/>
            <person name="Durrens P."/>
            <person name="Casaregola S."/>
            <person name="Lafontaine I."/>
            <person name="de Montigny J."/>
            <person name="Marck C."/>
            <person name="Neuveglise C."/>
            <person name="Talla E."/>
            <person name="Goffard N."/>
            <person name="Frangeul L."/>
            <person name="Aigle M."/>
            <person name="Anthouard V."/>
            <person name="Babour A."/>
            <person name="Barbe V."/>
            <person name="Barnay S."/>
            <person name="Blanchin S."/>
            <person name="Beckerich J.-M."/>
            <person name="Beyne E."/>
            <person name="Bleykasten C."/>
            <person name="Boisrame A."/>
            <person name="Boyer J."/>
            <person name="Cattolico L."/>
            <person name="Confanioleri F."/>
            <person name="de Daruvar A."/>
            <person name="Despons L."/>
            <person name="Fabre E."/>
            <person name="Fairhead C."/>
            <person name="Ferry-Dumazet H."/>
            <person name="Groppi A."/>
            <person name="Hantraye F."/>
            <person name="Hennequin C."/>
            <person name="Jauniaux N."/>
            <person name="Joyet P."/>
            <person name="Kachouri R."/>
            <person name="Kerrest A."/>
            <person name="Koszul R."/>
            <person name="Lemaire M."/>
            <person name="Lesur I."/>
            <person name="Ma L."/>
            <person name="Muller H."/>
            <person name="Nicaud J.-M."/>
            <person name="Nikolski M."/>
            <person name="Oztas S."/>
            <person name="Ozier-Kalogeropoulos O."/>
            <person name="Pellenz S."/>
            <person name="Potier S."/>
            <person name="Richard G.-F."/>
            <person name="Straub M.-L."/>
            <person name="Suleau A."/>
            <person name="Swennen D."/>
            <person name="Tekaia F."/>
            <person name="Wesolowski-Louvel M."/>
            <person name="Westhof E."/>
            <person name="Wirth B."/>
            <person name="Zeniou-Meyer M."/>
            <person name="Zivanovic Y."/>
            <person name="Bolotin-Fukuhara M."/>
            <person name="Thierry A."/>
            <person name="Bouchier C."/>
            <person name="Caudron B."/>
            <person name="Scarpelli C."/>
            <person name="Gaillardin C."/>
            <person name="Weissenbach J."/>
            <person name="Wincker P."/>
            <person name="Souciet J.-L."/>
        </authorList>
    </citation>
    <scope>NUCLEOTIDE SEQUENCE [LARGE SCALE GENOMIC DNA]</scope>
    <source>
        <strain>CLIB 122 / E 150</strain>
    </source>
</reference>
<name>AIM9_YARLI</name>
<gene>
    <name type="primary">AIM9</name>
    <name type="synonym">FMP29</name>
    <name type="ordered locus">YALI0D17160g</name>
</gene>